<evidence type="ECO:0000255" key="1">
    <source>
        <dbReference type="HAMAP-Rule" id="MF_00397"/>
    </source>
</evidence>
<protein>
    <recommendedName>
        <fullName evidence="1">Probable 2-(5''-triphosphoribosyl)-3'-dephosphocoenzyme-A synthase</fullName>
        <shortName evidence="1">2-(5''-triphosphoribosyl)-3'-dephospho-CoA synthase</shortName>
        <ecNumber evidence="1">2.4.2.52</ecNumber>
    </recommendedName>
</protein>
<sequence length="294" mass="32818">MTKAVLTSISQLALKALLYEVSLSPKPGLVDRFDNGAHDDMSFMTFIDSMIALSPFFQAYIETGFAYAKEEPLLLFNRLRQLGQKAEETMFCATQGINTHKGLNFSMALLLGTTGAYLARTPHLMTDLGRFSKEDTLAICRLVKPMTAHLIQTDLGHLNTKKEFTYGEQLFVTYGIKGPRGEASEGFTTLTDHALPYFRQMISQNDPETSQLRLLVYLMSIVEDGNLIHRGGIEAWKGVKADMRLLLQQDLSTTDLRLALSSYNQCLINQHLSPGGAADLLALTFYFAFLEKLL</sequence>
<comment type="catalytic activity">
    <reaction evidence="1">
        <text>3'-dephospho-CoA + ATP = 2'-(5''-triphospho-alpha-D-ribosyl)-3'-dephospho-CoA + adenine</text>
        <dbReference type="Rhea" id="RHEA:15117"/>
        <dbReference type="ChEBI" id="CHEBI:16708"/>
        <dbReference type="ChEBI" id="CHEBI:30616"/>
        <dbReference type="ChEBI" id="CHEBI:57328"/>
        <dbReference type="ChEBI" id="CHEBI:61378"/>
        <dbReference type="EC" id="2.4.2.52"/>
    </reaction>
</comment>
<comment type="similarity">
    <text evidence="1">Belongs to the CitG/MdcB family.</text>
</comment>
<reference key="1">
    <citation type="journal article" date="2006" name="Proc. Natl. Acad. Sci. U.S.A.">
        <title>Molecular genetic anatomy of inter- and intraserotype variation in the human bacterial pathogen group A Streptococcus.</title>
        <authorList>
            <person name="Beres S.B."/>
            <person name="Richter E.W."/>
            <person name="Nagiec M.J."/>
            <person name="Sumby P."/>
            <person name="Porcella S.F."/>
            <person name="DeLeo F.R."/>
            <person name="Musser J.M."/>
        </authorList>
    </citation>
    <scope>NUCLEOTIDE SEQUENCE [LARGE SCALE GENOMIC DNA]</scope>
    <source>
        <strain>MGAS10270</strain>
    </source>
</reference>
<keyword id="KW-0067">ATP-binding</keyword>
<keyword id="KW-0547">Nucleotide-binding</keyword>
<keyword id="KW-0808">Transferase</keyword>
<feature type="chain" id="PRO_0000255417" description="Probable 2-(5''-triphosphoribosyl)-3'-dephosphocoenzyme-A synthase">
    <location>
        <begin position="1"/>
        <end position="294"/>
    </location>
</feature>
<proteinExistence type="inferred from homology"/>
<accession>Q1JGR7</accession>
<dbReference type="EC" id="2.4.2.52" evidence="1"/>
<dbReference type="EMBL" id="CP000260">
    <property type="protein sequence ID" value="ABF34077.1"/>
    <property type="molecule type" value="Genomic_DNA"/>
</dbReference>
<dbReference type="KEGG" id="sph:MGAS10270_Spy1012"/>
<dbReference type="HOGENOM" id="CLU_056179_1_0_9"/>
<dbReference type="Proteomes" id="UP000002436">
    <property type="component" value="Chromosome"/>
</dbReference>
<dbReference type="GO" id="GO:0005524">
    <property type="term" value="F:ATP binding"/>
    <property type="evidence" value="ECO:0007669"/>
    <property type="project" value="UniProtKB-KW"/>
</dbReference>
<dbReference type="GO" id="GO:0046917">
    <property type="term" value="F:triphosphoribosyl-dephospho-CoA synthase activity"/>
    <property type="evidence" value="ECO:0007669"/>
    <property type="project" value="UniProtKB-UniRule"/>
</dbReference>
<dbReference type="GO" id="GO:0051191">
    <property type="term" value="P:prosthetic group biosynthetic process"/>
    <property type="evidence" value="ECO:0007669"/>
    <property type="project" value="TreeGrafter"/>
</dbReference>
<dbReference type="Gene3D" id="1.10.4200.10">
    <property type="entry name" value="Triphosphoribosyl-dephospho-CoA protein"/>
    <property type="match status" value="1"/>
</dbReference>
<dbReference type="HAMAP" id="MF_00397">
    <property type="entry name" value="CitG"/>
    <property type="match status" value="1"/>
</dbReference>
<dbReference type="InterPro" id="IPR002736">
    <property type="entry name" value="CitG"/>
</dbReference>
<dbReference type="InterPro" id="IPR017551">
    <property type="entry name" value="TriPribosyl-deP-CoA_syn_CitG"/>
</dbReference>
<dbReference type="NCBIfam" id="TIGR03125">
    <property type="entry name" value="citrate_citG"/>
    <property type="match status" value="1"/>
</dbReference>
<dbReference type="PANTHER" id="PTHR30201:SF2">
    <property type="entry name" value="2-(5''-TRIPHOSPHORIBOSYL)-3'-DEPHOSPHOCOENZYME-A SYNTHASE"/>
    <property type="match status" value="1"/>
</dbReference>
<dbReference type="PANTHER" id="PTHR30201">
    <property type="entry name" value="TRIPHOSPHORIBOSYL-DEPHOSPHO-COA SYNTHASE"/>
    <property type="match status" value="1"/>
</dbReference>
<dbReference type="Pfam" id="PF01874">
    <property type="entry name" value="CitG"/>
    <property type="match status" value="1"/>
</dbReference>
<name>CITG_STRPD</name>
<gene>
    <name evidence="1" type="primary">citG</name>
    <name type="ordered locus">MGAS10270_Spy1012</name>
</gene>
<organism>
    <name type="scientific">Streptococcus pyogenes serotype M2 (strain MGAS10270)</name>
    <dbReference type="NCBI Taxonomy" id="370552"/>
    <lineage>
        <taxon>Bacteria</taxon>
        <taxon>Bacillati</taxon>
        <taxon>Bacillota</taxon>
        <taxon>Bacilli</taxon>
        <taxon>Lactobacillales</taxon>
        <taxon>Streptococcaceae</taxon>
        <taxon>Streptococcus</taxon>
    </lineage>
</organism>